<proteinExistence type="evidence at protein level"/>
<feature type="chain" id="PRO_0000411091" description="Uncharacterized protein C16orf95">
    <location>
        <begin position="1"/>
        <end position="158"/>
    </location>
</feature>
<feature type="region of interest" description="Disordered" evidence="1">
    <location>
        <begin position="1"/>
        <end position="26"/>
    </location>
</feature>
<gene>
    <name type="primary">C16orf95</name>
</gene>
<sequence>MRASRSPPSPRRCHHHHEATGAASGAAAGGPGAGCVGLCRLALTPSAQDGRNSTFQTYKKEVCLPRHSMHPGPWAICCECQTRFGGRLPVSRVEAALPYWVPLSLRPRKQHPCWMHAAGTTAGGSAVMSACCPSSSSSRPPTRTSYRLLQRVCCPSAS</sequence>
<organism>
    <name type="scientific">Homo sapiens</name>
    <name type="common">Human</name>
    <dbReference type="NCBI Taxonomy" id="9606"/>
    <lineage>
        <taxon>Eukaryota</taxon>
        <taxon>Metazoa</taxon>
        <taxon>Chordata</taxon>
        <taxon>Craniata</taxon>
        <taxon>Vertebrata</taxon>
        <taxon>Euteleostomi</taxon>
        <taxon>Mammalia</taxon>
        <taxon>Eutheria</taxon>
        <taxon>Euarchontoglires</taxon>
        <taxon>Primates</taxon>
        <taxon>Haplorrhini</taxon>
        <taxon>Catarrhini</taxon>
        <taxon>Hominidae</taxon>
        <taxon>Homo</taxon>
    </lineage>
</organism>
<accession>Q9H693</accession>
<dbReference type="EMBL" id="AK026130">
    <property type="protein sequence ID" value="BAB15370.1"/>
    <property type="molecule type" value="mRNA"/>
</dbReference>
<dbReference type="EMBL" id="AC010531">
    <property type="status" value="NOT_ANNOTATED_CDS"/>
    <property type="molecule type" value="Genomic_DNA"/>
</dbReference>
<dbReference type="CCDS" id="CCDS54049.1"/>
<dbReference type="RefSeq" id="NP_001182054.1">
    <property type="nucleotide sequence ID" value="NM_001195125.3"/>
</dbReference>
<dbReference type="BioGRID" id="942861">
    <property type="interactions" value="1"/>
</dbReference>
<dbReference type="FunCoup" id="Q9H693">
    <property type="interactions" value="3"/>
</dbReference>
<dbReference type="STRING" id="9606.ENSP00000455079"/>
<dbReference type="GlyGen" id="Q9H693">
    <property type="glycosylation" value="1 site, 1 O-linked glycan (1 site)"/>
</dbReference>
<dbReference type="iPTMnet" id="Q9H693"/>
<dbReference type="PhosphoSitePlus" id="Q9H693"/>
<dbReference type="BioMuta" id="C16orf95"/>
<dbReference type="MassIVE" id="Q9H693"/>
<dbReference type="PaxDb" id="9606-ENSP00000455079"/>
<dbReference type="PeptideAtlas" id="Q9H693"/>
<dbReference type="ProteomicsDB" id="80964"/>
<dbReference type="Antibodypedia" id="63715">
    <property type="antibodies" value="9 antibodies from 5 providers"/>
</dbReference>
<dbReference type="DNASU" id="100506581"/>
<dbReference type="Ensembl" id="ENST00000253461.8">
    <property type="protein sequence ID" value="ENSP00000253461.4"/>
    <property type="gene ID" value="ENSG00000260456.7"/>
</dbReference>
<dbReference type="GeneID" id="100506581"/>
<dbReference type="KEGG" id="hsa:100506581"/>
<dbReference type="UCSC" id="uc002fju.4">
    <property type="organism name" value="human"/>
</dbReference>
<dbReference type="AGR" id="HGNC:40033"/>
<dbReference type="CTD" id="100506581"/>
<dbReference type="DisGeNET" id="100506581"/>
<dbReference type="GeneCards" id="C16orf95"/>
<dbReference type="HGNC" id="HGNC:40033">
    <property type="gene designation" value="C16orf95"/>
</dbReference>
<dbReference type="HPA" id="ENSG00000260456">
    <property type="expression patterns" value="Tissue enriched (testis)"/>
</dbReference>
<dbReference type="neXtProt" id="NX_Q9H693"/>
<dbReference type="OpenTargets" id="ENSG00000260456"/>
<dbReference type="VEuPathDB" id="HostDB:ENSG00000260456"/>
<dbReference type="eggNOG" id="ENOG502TF3P">
    <property type="taxonomic scope" value="Eukaryota"/>
</dbReference>
<dbReference type="GeneTree" id="ENSGT00390000003910"/>
<dbReference type="HOGENOM" id="CLU_1690898_0_0_1"/>
<dbReference type="InParanoid" id="Q9H693"/>
<dbReference type="OrthoDB" id="9789756at2759"/>
<dbReference type="PAN-GO" id="Q9H693">
    <property type="GO annotations" value="0 GO annotations based on evolutionary models"/>
</dbReference>
<dbReference type="PhylomeDB" id="Q9H693"/>
<dbReference type="PathwayCommons" id="Q9H693"/>
<dbReference type="BioGRID-ORCS" id="100506581">
    <property type="hits" value="7 hits in 1117 CRISPR screens"/>
</dbReference>
<dbReference type="ChiTaRS" id="C16orf95">
    <property type="organism name" value="human"/>
</dbReference>
<dbReference type="Pharos" id="Q9H693">
    <property type="development level" value="Tdark"/>
</dbReference>
<dbReference type="PRO" id="PR:Q9H693"/>
<dbReference type="Proteomes" id="UP000005640">
    <property type="component" value="Chromosome 16"/>
</dbReference>
<dbReference type="RNAct" id="Q9H693">
    <property type="molecule type" value="protein"/>
</dbReference>
<dbReference type="Bgee" id="ENSG00000260456">
    <property type="expression patterns" value="Expressed in left testis and 92 other cell types or tissues"/>
</dbReference>
<dbReference type="ExpressionAtlas" id="Q9H693">
    <property type="expression patterns" value="baseline and differential"/>
</dbReference>
<dbReference type="InterPro" id="IPR027919">
    <property type="entry name" value="DUF4568"/>
</dbReference>
<dbReference type="PANTHER" id="PTHR14693">
    <property type="entry name" value="RIKEN CDNA 1700018B08"/>
    <property type="match status" value="1"/>
</dbReference>
<dbReference type="PANTHER" id="PTHR14693:SF0">
    <property type="entry name" value="RIKEN CDNA 1700018B08 GENE"/>
    <property type="match status" value="1"/>
</dbReference>
<dbReference type="Pfam" id="PF15132">
    <property type="entry name" value="DUF4568"/>
    <property type="match status" value="1"/>
</dbReference>
<name>CP095_HUMAN</name>
<evidence type="ECO:0000256" key="1">
    <source>
        <dbReference type="SAM" id="MobiDB-lite"/>
    </source>
</evidence>
<protein>
    <recommendedName>
        <fullName>Uncharacterized protein C16orf95</fullName>
    </recommendedName>
</protein>
<reference key="1">
    <citation type="journal article" date="2004" name="Nat. Genet.">
        <title>Complete sequencing and characterization of 21,243 full-length human cDNAs.</title>
        <authorList>
            <person name="Ota T."/>
            <person name="Suzuki Y."/>
            <person name="Nishikawa T."/>
            <person name="Otsuki T."/>
            <person name="Sugiyama T."/>
            <person name="Irie R."/>
            <person name="Wakamatsu A."/>
            <person name="Hayashi K."/>
            <person name="Sato H."/>
            <person name="Nagai K."/>
            <person name="Kimura K."/>
            <person name="Makita H."/>
            <person name="Sekine M."/>
            <person name="Obayashi M."/>
            <person name="Nishi T."/>
            <person name="Shibahara T."/>
            <person name="Tanaka T."/>
            <person name="Ishii S."/>
            <person name="Yamamoto J."/>
            <person name="Saito K."/>
            <person name="Kawai Y."/>
            <person name="Isono Y."/>
            <person name="Nakamura Y."/>
            <person name="Nagahari K."/>
            <person name="Murakami K."/>
            <person name="Yasuda T."/>
            <person name="Iwayanagi T."/>
            <person name="Wagatsuma M."/>
            <person name="Shiratori A."/>
            <person name="Sudo H."/>
            <person name="Hosoiri T."/>
            <person name="Kaku Y."/>
            <person name="Kodaira H."/>
            <person name="Kondo H."/>
            <person name="Sugawara M."/>
            <person name="Takahashi M."/>
            <person name="Kanda K."/>
            <person name="Yokoi T."/>
            <person name="Furuya T."/>
            <person name="Kikkawa E."/>
            <person name="Omura Y."/>
            <person name="Abe K."/>
            <person name="Kamihara K."/>
            <person name="Katsuta N."/>
            <person name="Sato K."/>
            <person name="Tanikawa M."/>
            <person name="Yamazaki M."/>
            <person name="Ninomiya K."/>
            <person name="Ishibashi T."/>
            <person name="Yamashita H."/>
            <person name="Murakawa K."/>
            <person name="Fujimori K."/>
            <person name="Tanai H."/>
            <person name="Kimata M."/>
            <person name="Watanabe M."/>
            <person name="Hiraoka S."/>
            <person name="Chiba Y."/>
            <person name="Ishida S."/>
            <person name="Ono Y."/>
            <person name="Takiguchi S."/>
            <person name="Watanabe S."/>
            <person name="Yosida M."/>
            <person name="Hotuta T."/>
            <person name="Kusano J."/>
            <person name="Kanehori K."/>
            <person name="Takahashi-Fujii A."/>
            <person name="Hara H."/>
            <person name="Tanase T.-O."/>
            <person name="Nomura Y."/>
            <person name="Togiya S."/>
            <person name="Komai F."/>
            <person name="Hara R."/>
            <person name="Takeuchi K."/>
            <person name="Arita M."/>
            <person name="Imose N."/>
            <person name="Musashino K."/>
            <person name="Yuuki H."/>
            <person name="Oshima A."/>
            <person name="Sasaki N."/>
            <person name="Aotsuka S."/>
            <person name="Yoshikawa Y."/>
            <person name="Matsunawa H."/>
            <person name="Ichihara T."/>
            <person name="Shiohata N."/>
            <person name="Sano S."/>
            <person name="Moriya S."/>
            <person name="Momiyama H."/>
            <person name="Satoh N."/>
            <person name="Takami S."/>
            <person name="Terashima Y."/>
            <person name="Suzuki O."/>
            <person name="Nakagawa S."/>
            <person name="Senoh A."/>
            <person name="Mizoguchi H."/>
            <person name="Goto Y."/>
            <person name="Shimizu F."/>
            <person name="Wakebe H."/>
            <person name="Hishigaki H."/>
            <person name="Watanabe T."/>
            <person name="Sugiyama A."/>
            <person name="Takemoto M."/>
            <person name="Kawakami B."/>
            <person name="Yamazaki M."/>
            <person name="Watanabe K."/>
            <person name="Kumagai A."/>
            <person name="Itakura S."/>
            <person name="Fukuzumi Y."/>
            <person name="Fujimori Y."/>
            <person name="Komiyama M."/>
            <person name="Tashiro H."/>
            <person name="Tanigami A."/>
            <person name="Fujiwara T."/>
            <person name="Ono T."/>
            <person name="Yamada K."/>
            <person name="Fujii Y."/>
            <person name="Ozaki K."/>
            <person name="Hirao M."/>
            <person name="Ohmori Y."/>
            <person name="Kawabata A."/>
            <person name="Hikiji T."/>
            <person name="Kobatake N."/>
            <person name="Inagaki H."/>
            <person name="Ikema Y."/>
            <person name="Okamoto S."/>
            <person name="Okitani R."/>
            <person name="Kawakami T."/>
            <person name="Noguchi S."/>
            <person name="Itoh T."/>
            <person name="Shigeta K."/>
            <person name="Senba T."/>
            <person name="Matsumura K."/>
            <person name="Nakajima Y."/>
            <person name="Mizuno T."/>
            <person name="Morinaga M."/>
            <person name="Sasaki M."/>
            <person name="Togashi T."/>
            <person name="Oyama M."/>
            <person name="Hata H."/>
            <person name="Watanabe M."/>
            <person name="Komatsu T."/>
            <person name="Mizushima-Sugano J."/>
            <person name="Satoh T."/>
            <person name="Shirai Y."/>
            <person name="Takahashi Y."/>
            <person name="Nakagawa K."/>
            <person name="Okumura K."/>
            <person name="Nagase T."/>
            <person name="Nomura N."/>
            <person name="Kikuchi H."/>
            <person name="Masuho Y."/>
            <person name="Yamashita R."/>
            <person name="Nakai K."/>
            <person name="Yada T."/>
            <person name="Nakamura Y."/>
            <person name="Ohara O."/>
            <person name="Isogai T."/>
            <person name="Sugano S."/>
        </authorList>
    </citation>
    <scope>NUCLEOTIDE SEQUENCE [LARGE SCALE MRNA]</scope>
</reference>
<reference key="2">
    <citation type="journal article" date="2004" name="Nature">
        <title>The sequence and analysis of duplication-rich human chromosome 16.</title>
        <authorList>
            <person name="Martin J."/>
            <person name="Han C."/>
            <person name="Gordon L.A."/>
            <person name="Terry A."/>
            <person name="Prabhakar S."/>
            <person name="She X."/>
            <person name="Xie G."/>
            <person name="Hellsten U."/>
            <person name="Chan Y.M."/>
            <person name="Altherr M."/>
            <person name="Couronne O."/>
            <person name="Aerts A."/>
            <person name="Bajorek E."/>
            <person name="Black S."/>
            <person name="Blumer H."/>
            <person name="Branscomb E."/>
            <person name="Brown N.C."/>
            <person name="Bruno W.J."/>
            <person name="Buckingham J.M."/>
            <person name="Callen D.F."/>
            <person name="Campbell C.S."/>
            <person name="Campbell M.L."/>
            <person name="Campbell E.W."/>
            <person name="Caoile C."/>
            <person name="Challacombe J.F."/>
            <person name="Chasteen L.A."/>
            <person name="Chertkov O."/>
            <person name="Chi H.C."/>
            <person name="Christensen M."/>
            <person name="Clark L.M."/>
            <person name="Cohn J.D."/>
            <person name="Denys M."/>
            <person name="Detter J.C."/>
            <person name="Dickson M."/>
            <person name="Dimitrijevic-Bussod M."/>
            <person name="Escobar J."/>
            <person name="Fawcett J.J."/>
            <person name="Flowers D."/>
            <person name="Fotopulos D."/>
            <person name="Glavina T."/>
            <person name="Gomez M."/>
            <person name="Gonzales E."/>
            <person name="Goodstein D."/>
            <person name="Goodwin L.A."/>
            <person name="Grady D.L."/>
            <person name="Grigoriev I."/>
            <person name="Groza M."/>
            <person name="Hammon N."/>
            <person name="Hawkins T."/>
            <person name="Haydu L."/>
            <person name="Hildebrand C.E."/>
            <person name="Huang W."/>
            <person name="Israni S."/>
            <person name="Jett J."/>
            <person name="Jewett P.B."/>
            <person name="Kadner K."/>
            <person name="Kimball H."/>
            <person name="Kobayashi A."/>
            <person name="Krawczyk M.-C."/>
            <person name="Leyba T."/>
            <person name="Longmire J.L."/>
            <person name="Lopez F."/>
            <person name="Lou Y."/>
            <person name="Lowry S."/>
            <person name="Ludeman T."/>
            <person name="Manohar C.F."/>
            <person name="Mark G.A."/>
            <person name="McMurray K.L."/>
            <person name="Meincke L.J."/>
            <person name="Morgan J."/>
            <person name="Moyzis R.K."/>
            <person name="Mundt M.O."/>
            <person name="Munk A.C."/>
            <person name="Nandkeshwar R.D."/>
            <person name="Pitluck S."/>
            <person name="Pollard M."/>
            <person name="Predki P."/>
            <person name="Parson-Quintana B."/>
            <person name="Ramirez L."/>
            <person name="Rash S."/>
            <person name="Retterer J."/>
            <person name="Ricke D.O."/>
            <person name="Robinson D.L."/>
            <person name="Rodriguez A."/>
            <person name="Salamov A."/>
            <person name="Saunders E.H."/>
            <person name="Scott D."/>
            <person name="Shough T."/>
            <person name="Stallings R.L."/>
            <person name="Stalvey M."/>
            <person name="Sutherland R.D."/>
            <person name="Tapia R."/>
            <person name="Tesmer J.G."/>
            <person name="Thayer N."/>
            <person name="Thompson L.S."/>
            <person name="Tice H."/>
            <person name="Torney D.C."/>
            <person name="Tran-Gyamfi M."/>
            <person name="Tsai M."/>
            <person name="Ulanovsky L.E."/>
            <person name="Ustaszewska A."/>
            <person name="Vo N."/>
            <person name="White P.S."/>
            <person name="Williams A.L."/>
            <person name="Wills P.L."/>
            <person name="Wu J.-R."/>
            <person name="Wu K."/>
            <person name="Yang J."/>
            <person name="DeJong P."/>
            <person name="Bruce D."/>
            <person name="Doggett N.A."/>
            <person name="Deaven L."/>
            <person name="Schmutz J."/>
            <person name="Grimwood J."/>
            <person name="Richardson P."/>
            <person name="Rokhsar D.S."/>
            <person name="Eichler E.E."/>
            <person name="Gilna P."/>
            <person name="Lucas S.M."/>
            <person name="Myers R.M."/>
            <person name="Rubin E.M."/>
            <person name="Pennacchio L.A."/>
        </authorList>
    </citation>
    <scope>NUCLEOTIDE SEQUENCE [LARGE SCALE GENOMIC DNA]</scope>
</reference>
<keyword id="KW-1267">Proteomics identification</keyword>
<keyword id="KW-1185">Reference proteome</keyword>